<keyword id="KW-1015">Disulfide bond</keyword>
<keyword id="KW-0945">Host-virus interaction</keyword>
<keyword id="KW-0426">Late protein</keyword>
<keyword id="KW-0472">Membrane</keyword>
<keyword id="KW-1185">Reference proteome</keyword>
<keyword id="KW-0812">Transmembrane</keyword>
<keyword id="KW-1133">Transmembrane helix</keyword>
<keyword id="KW-1161">Viral attachment to host cell</keyword>
<keyword id="KW-0261">Viral envelope protein</keyword>
<keyword id="KW-0946">Virion</keyword>
<keyword id="KW-1160">Virus entry into host cell</keyword>
<comment type="function">
    <text evidence="1">Binds to chondroitin sulfate on the cell surface to provide virion attachment to target cell.</text>
</comment>
<comment type="subunit">
    <text evidence="2">Homodimer; disulfide-linked.</text>
</comment>
<comment type="subcellular location">
    <subcellularLocation>
        <location evidence="2">Virion membrane</location>
    </subcellularLocation>
    <text evidence="2">Component of the mature virion (MV) membrane.</text>
</comment>
<comment type="induction">
    <text>Expressed in the late phase of the viral replicative cycle.</text>
</comment>
<comment type="PTM">
    <text evidence="2">Apparently non-glycosylated.</text>
</comment>
<comment type="similarity">
    <text evidence="5">Belongs to the alpha-carbonic anhydrase family.</text>
</comment>
<name>CAHH_VAR67</name>
<accession>P0DSY1</accession>
<accession>P33065</accession>
<organismHost>
    <name type="scientific">Homo sapiens</name>
    <name type="common">Human</name>
    <dbReference type="NCBI Taxonomy" id="9606"/>
</organismHost>
<reference key="1">
    <citation type="journal article" date="1993" name="Virus Res.">
        <title>Nucleotide sequence analysis of variola virus HindIII M, L, I genome fragments.</title>
        <authorList>
            <person name="Shchelkunov S.N."/>
            <person name="Blinov V.M."/>
            <person name="Totmenin A.V."/>
            <person name="Marennikova S.S."/>
            <person name="Kolykhalov A.A."/>
            <person name="Frolov I.V."/>
            <person name="Chizhikov V.E."/>
            <person name="Gytorov V.V."/>
            <person name="Gashikov P.V."/>
            <person name="Belanov E.F."/>
            <person name="Belavin P.A."/>
            <person name="Resenchuk S.M."/>
            <person name="Andzhaparidze O.G."/>
            <person name="Sandakhchiev L.S."/>
        </authorList>
    </citation>
    <scope>NUCLEOTIDE SEQUENCE [GENOMIC DNA]</scope>
</reference>
<reference key="2">
    <citation type="journal article" date="1993" name="FEBS Lett.">
        <title>Genes of variola and vaccinia viruses necessary to overcome the host protective mechanisms.</title>
        <authorList>
            <person name="Shchelkunov S.N."/>
            <person name="Blinov V.M."/>
            <person name="Sandakhchiev L.S."/>
        </authorList>
    </citation>
    <scope>NUCLEOTIDE SEQUENCE [LARGE SCALE GENOMIC DNA]</scope>
</reference>
<organism>
    <name type="scientific">Variola virus (isolate Human/India/Ind3/1967)</name>
    <name type="common">VARV</name>
    <name type="synonym">Smallpox virus</name>
    <dbReference type="NCBI Taxonomy" id="587200"/>
    <lineage>
        <taxon>Viruses</taxon>
        <taxon>Varidnaviria</taxon>
        <taxon>Bamfordvirae</taxon>
        <taxon>Nucleocytoviricota</taxon>
        <taxon>Pokkesviricetes</taxon>
        <taxon>Chitovirales</taxon>
        <taxon>Poxviridae</taxon>
        <taxon>Chordopoxvirinae</taxon>
        <taxon>Orthopoxvirus</taxon>
        <taxon>Variola virus</taxon>
    </lineage>
</organism>
<sequence>MSQQLSPINIETKKAISNARLKPLNIHYNESKPTTIQNTGKLVRINFKGGYLSGGFLPNEYVLSSLHIYWGKEDDYGSNHLIDVYKYSGEINLVHWNKKKYSSYEEAKKHDDGLIIISIFLQVSDHKNVYFQKIVNQLDSIRTANTSAPFDSVFYLDNLLPSKLDYFKYLGTTINHSADAVWIIFPTPINIHSDQLSKFRTLLSLSNHEGKPHYITENYRNPYKLNDDTEVYYSGEIIRAATTSPARENYFMRWLSDLRETCFSYYQKYIEGNKTFAIIAIVFVYILTAILFLMSRRYSREKQN</sequence>
<feature type="chain" id="PRO_0000448225" description="Cell surface-binding protein OPG105">
    <location>
        <begin position="1"/>
        <end position="304"/>
    </location>
</feature>
<feature type="topological domain" description="Virion surface" evidence="3">
    <location>
        <begin position="1"/>
        <end position="275"/>
    </location>
</feature>
<feature type="transmembrane region" description="Helical" evidence="3">
    <location>
        <begin position="276"/>
        <end position="294"/>
    </location>
</feature>
<feature type="topological domain" description="Intravirion" evidence="3">
    <location>
        <begin position="295"/>
        <end position="304"/>
    </location>
</feature>
<feature type="domain" description="Alpha-carbonic anhydrase" evidence="4">
    <location>
        <begin position="1"/>
        <end position="235"/>
    </location>
</feature>
<feature type="disulfide bond" description="Interchain" evidence="1">
    <location>
        <position position="262"/>
    </location>
</feature>
<protein>
    <recommendedName>
        <fullName>Cell surface-binding protein OPG105</fullName>
    </recommendedName>
    <alternativeName>
        <fullName>Carbonic anhydrase homolog</fullName>
    </alternativeName>
</protein>
<proteinExistence type="evidence at transcript level"/>
<dbReference type="EMBL" id="X67119">
    <property type="protein sequence ID" value="CAA47597.1"/>
    <property type="molecule type" value="Genomic_DNA"/>
</dbReference>
<dbReference type="EMBL" id="X69198">
    <property type="protein sequence ID" value="CAA49039.1"/>
    <property type="molecule type" value="Genomic_DNA"/>
</dbReference>
<dbReference type="PIR" id="E36847">
    <property type="entry name" value="E36847"/>
</dbReference>
<dbReference type="SMR" id="P0DSY1"/>
<dbReference type="KEGG" id="vg:1486424"/>
<dbReference type="Proteomes" id="UP000002060">
    <property type="component" value="Segment"/>
</dbReference>
<dbReference type="GO" id="GO:0016020">
    <property type="term" value="C:membrane"/>
    <property type="evidence" value="ECO:0007669"/>
    <property type="project" value="UniProtKB-KW"/>
</dbReference>
<dbReference type="GO" id="GO:0019031">
    <property type="term" value="C:viral envelope"/>
    <property type="evidence" value="ECO:0007669"/>
    <property type="project" value="UniProtKB-KW"/>
</dbReference>
<dbReference type="GO" id="GO:0055036">
    <property type="term" value="C:virion membrane"/>
    <property type="evidence" value="ECO:0007669"/>
    <property type="project" value="UniProtKB-SubCell"/>
</dbReference>
<dbReference type="GO" id="GO:0004089">
    <property type="term" value="F:carbonate dehydratase activity"/>
    <property type="evidence" value="ECO:0007669"/>
    <property type="project" value="InterPro"/>
</dbReference>
<dbReference type="GO" id="GO:0008270">
    <property type="term" value="F:zinc ion binding"/>
    <property type="evidence" value="ECO:0007669"/>
    <property type="project" value="InterPro"/>
</dbReference>
<dbReference type="GO" id="GO:0046718">
    <property type="term" value="P:symbiont entry into host cell"/>
    <property type="evidence" value="ECO:0007669"/>
    <property type="project" value="UniProtKB-KW"/>
</dbReference>
<dbReference type="GO" id="GO:0019062">
    <property type="term" value="P:virion attachment to host cell"/>
    <property type="evidence" value="ECO:0007669"/>
    <property type="project" value="UniProtKB-KW"/>
</dbReference>
<dbReference type="Gene3D" id="3.10.200.10">
    <property type="entry name" value="Alpha carbonic anhydrase"/>
    <property type="match status" value="1"/>
</dbReference>
<dbReference type="InterPro" id="IPR001148">
    <property type="entry name" value="CA_dom"/>
</dbReference>
<dbReference type="InterPro" id="IPR036398">
    <property type="entry name" value="CA_dom_sf"/>
</dbReference>
<dbReference type="InterPro" id="IPR023561">
    <property type="entry name" value="Carbonic_anhydrase_a-class"/>
</dbReference>
<dbReference type="PANTHER" id="PTHR18952">
    <property type="entry name" value="CARBONIC ANHYDRASE"/>
    <property type="match status" value="1"/>
</dbReference>
<dbReference type="PANTHER" id="PTHR18952:SF124">
    <property type="entry name" value="CARBONIC ANHYDRASE 7"/>
    <property type="match status" value="1"/>
</dbReference>
<dbReference type="Pfam" id="PF00194">
    <property type="entry name" value="Carb_anhydrase"/>
    <property type="match status" value="1"/>
</dbReference>
<dbReference type="SMART" id="SM01057">
    <property type="entry name" value="Carb_anhydrase"/>
    <property type="match status" value="1"/>
</dbReference>
<dbReference type="SUPFAM" id="SSF51069">
    <property type="entry name" value="Carbonic anhydrase"/>
    <property type="match status" value="1"/>
</dbReference>
<dbReference type="PROSITE" id="PS51144">
    <property type="entry name" value="ALPHA_CA_2"/>
    <property type="match status" value="1"/>
</dbReference>
<evidence type="ECO:0000250" key="1"/>
<evidence type="ECO:0000250" key="2">
    <source>
        <dbReference type="UniProtKB" id="P04195"/>
    </source>
</evidence>
<evidence type="ECO:0000255" key="3"/>
<evidence type="ECO:0000255" key="4">
    <source>
        <dbReference type="PROSITE-ProRule" id="PRU01134"/>
    </source>
</evidence>
<evidence type="ECO:0000305" key="5"/>
<gene>
    <name type="primary">OPG105</name>
    <name type="ORF">D8L</name>
</gene>